<protein>
    <recommendedName>
        <fullName>MARCKS-related protein</fullName>
    </recommendedName>
    <alternativeName>
        <fullName>MARCKS-like protein 1</fullName>
    </alternativeName>
</protein>
<name>MRP_BOVIN</name>
<evidence type="ECO:0000250" key="1">
    <source>
        <dbReference type="UniProtKB" id="P28667"/>
    </source>
</evidence>
<evidence type="ECO:0000250" key="2">
    <source>
        <dbReference type="UniProtKB" id="P49006"/>
    </source>
</evidence>
<evidence type="ECO:0000256" key="3">
    <source>
        <dbReference type="SAM" id="MobiDB-lite"/>
    </source>
</evidence>
<evidence type="ECO:0000305" key="4"/>
<dbReference type="EMBL" id="BC120310">
    <property type="protein sequence ID" value="AAI20311.1"/>
    <property type="molecule type" value="mRNA"/>
</dbReference>
<dbReference type="EMBL" id="BC120422">
    <property type="protein sequence ID" value="AAI20423.1"/>
    <property type="molecule type" value="mRNA"/>
</dbReference>
<dbReference type="RefSeq" id="NP_001069640.1">
    <property type="nucleotide sequence ID" value="NM_001076172.1"/>
</dbReference>
<dbReference type="FunCoup" id="Q0VBZ9">
    <property type="interactions" value="1187"/>
</dbReference>
<dbReference type="STRING" id="9913.ENSBTAP00000054896"/>
<dbReference type="PaxDb" id="9913-ENSBTAP00000054436"/>
<dbReference type="PeptideAtlas" id="Q0VBZ9"/>
<dbReference type="GeneID" id="539555"/>
<dbReference type="KEGG" id="bta:539555"/>
<dbReference type="CTD" id="65108"/>
<dbReference type="VEuPathDB" id="HostDB:ENSBTAG00000046862"/>
<dbReference type="eggNOG" id="ENOG502RYXK">
    <property type="taxonomic scope" value="Eukaryota"/>
</dbReference>
<dbReference type="InParanoid" id="Q0VBZ9"/>
<dbReference type="OMA" id="HVIYNGD"/>
<dbReference type="OrthoDB" id="9948538at2759"/>
<dbReference type="Proteomes" id="UP000009136">
    <property type="component" value="Chromosome 2"/>
</dbReference>
<dbReference type="Bgee" id="ENSBTAG00000046862">
    <property type="expression patterns" value="Expressed in floor plate of diencephalon and 105 other cell types or tissues"/>
</dbReference>
<dbReference type="GO" id="GO:0005737">
    <property type="term" value="C:cytoplasm"/>
    <property type="evidence" value="ECO:0000318"/>
    <property type="project" value="GO_Central"/>
</dbReference>
<dbReference type="GO" id="GO:0005856">
    <property type="term" value="C:cytoskeleton"/>
    <property type="evidence" value="ECO:0007669"/>
    <property type="project" value="UniProtKB-SubCell"/>
</dbReference>
<dbReference type="GO" id="GO:0005886">
    <property type="term" value="C:plasma membrane"/>
    <property type="evidence" value="ECO:0000318"/>
    <property type="project" value="GO_Central"/>
</dbReference>
<dbReference type="GO" id="GO:0051015">
    <property type="term" value="F:actin filament binding"/>
    <property type="evidence" value="ECO:0000318"/>
    <property type="project" value="GO_Central"/>
</dbReference>
<dbReference type="GO" id="GO:0005516">
    <property type="term" value="F:calmodulin binding"/>
    <property type="evidence" value="ECO:0007669"/>
    <property type="project" value="UniProtKB-KW"/>
</dbReference>
<dbReference type="GO" id="GO:0007015">
    <property type="term" value="P:actin filament organization"/>
    <property type="evidence" value="ECO:0000318"/>
    <property type="project" value="GO_Central"/>
</dbReference>
<dbReference type="GO" id="GO:0007417">
    <property type="term" value="P:central nervous system development"/>
    <property type="evidence" value="ECO:0000318"/>
    <property type="project" value="GO_Central"/>
</dbReference>
<dbReference type="InterPro" id="IPR002101">
    <property type="entry name" value="MARCKS"/>
</dbReference>
<dbReference type="PANTHER" id="PTHR14353:SF8">
    <property type="entry name" value="MARCKS-RELATED PROTEIN"/>
    <property type="match status" value="1"/>
</dbReference>
<dbReference type="PANTHER" id="PTHR14353">
    <property type="entry name" value="MYRISTOYLATED ALANINE-RICH C-KINASE SUBSTRATE MARCKS"/>
    <property type="match status" value="1"/>
</dbReference>
<dbReference type="Pfam" id="PF02063">
    <property type="entry name" value="MARCKS"/>
    <property type="match status" value="2"/>
</dbReference>
<dbReference type="PRINTS" id="PR00963">
    <property type="entry name" value="MARCKS"/>
</dbReference>
<dbReference type="PROSITE" id="PS00826">
    <property type="entry name" value="MARCKS_1"/>
    <property type="match status" value="1"/>
</dbReference>
<dbReference type="PROSITE" id="PS00827">
    <property type="entry name" value="MARCKS_2"/>
    <property type="match status" value="1"/>
</dbReference>
<organism>
    <name type="scientific">Bos taurus</name>
    <name type="common">Bovine</name>
    <dbReference type="NCBI Taxonomy" id="9913"/>
    <lineage>
        <taxon>Eukaryota</taxon>
        <taxon>Metazoa</taxon>
        <taxon>Chordata</taxon>
        <taxon>Craniata</taxon>
        <taxon>Vertebrata</taxon>
        <taxon>Euteleostomi</taxon>
        <taxon>Mammalia</taxon>
        <taxon>Eutheria</taxon>
        <taxon>Laurasiatheria</taxon>
        <taxon>Artiodactyla</taxon>
        <taxon>Ruminantia</taxon>
        <taxon>Pecora</taxon>
        <taxon>Bovidae</taxon>
        <taxon>Bovinae</taxon>
        <taxon>Bos</taxon>
    </lineage>
</organism>
<reference key="1">
    <citation type="submission" date="2006-08" db="EMBL/GenBank/DDBJ databases">
        <authorList>
            <consortium name="NIH - Mammalian Gene Collection (MGC) project"/>
        </authorList>
    </citation>
    <scope>NUCLEOTIDE SEQUENCE [LARGE SCALE MRNA]</scope>
    <source>
        <strain>Hereford</strain>
        <tissue>Hippocampus</tissue>
    </source>
</reference>
<sequence>MGSQSSKAPRGDVTAEEAAGASPAKVNGQENGHVKSNGDLSPKGEGESPPVNGTEEAAGATGDAIEPAPPSQGAEAKGEVPPKETPKKKKKFSFKKPFKLSGLSFKRNRKEGGGDSSASSPTEEEQEQGEISACGEEGTAQEGKAAATPESQEPQAKGAEASAAAKGGDTEEAGPQAAEPSTPSGPESDPAPASEQNE</sequence>
<accession>Q0VBZ9</accession>
<keyword id="KW-0009">Actin-binding</keyword>
<keyword id="KW-0112">Calmodulin-binding</keyword>
<keyword id="KW-1003">Cell membrane</keyword>
<keyword id="KW-0963">Cytoplasm</keyword>
<keyword id="KW-0206">Cytoskeleton</keyword>
<keyword id="KW-0449">Lipoprotein</keyword>
<keyword id="KW-0472">Membrane</keyword>
<keyword id="KW-0519">Myristate</keyword>
<keyword id="KW-0597">Phosphoprotein</keyword>
<keyword id="KW-1185">Reference proteome</keyword>
<proteinExistence type="evidence at transcript level"/>
<gene>
    <name type="primary">MARCKSL1</name>
</gene>
<feature type="initiator methionine" description="Removed" evidence="2">
    <location>
        <position position="1"/>
    </location>
</feature>
<feature type="chain" id="PRO_0000283705" description="MARCKS-related protein">
    <location>
        <begin position="2"/>
        <end position="198"/>
    </location>
</feature>
<feature type="region of interest" description="Disordered" evidence="3">
    <location>
        <begin position="1"/>
        <end position="198"/>
    </location>
</feature>
<feature type="region of interest" description="Effector domain involved in lipid-binding and calmodulin-binding" evidence="1">
    <location>
        <begin position="87"/>
        <end position="110"/>
    </location>
</feature>
<feature type="compositionally biased region" description="Low complexity" evidence="3">
    <location>
        <begin position="53"/>
        <end position="62"/>
    </location>
</feature>
<feature type="compositionally biased region" description="Basic and acidic residues" evidence="3">
    <location>
        <begin position="76"/>
        <end position="85"/>
    </location>
</feature>
<feature type="compositionally biased region" description="Basic residues" evidence="3">
    <location>
        <begin position="86"/>
        <end position="98"/>
    </location>
</feature>
<feature type="compositionally biased region" description="Low complexity" evidence="3">
    <location>
        <begin position="156"/>
        <end position="167"/>
    </location>
</feature>
<feature type="modified residue" description="Phosphothreonine" evidence="2">
    <location>
        <position position="14"/>
    </location>
</feature>
<feature type="modified residue" description="Phosphoserine" evidence="2">
    <location>
        <position position="22"/>
    </location>
</feature>
<feature type="modified residue" description="Phosphoserine" evidence="2">
    <location>
        <position position="36"/>
    </location>
</feature>
<feature type="modified residue" description="Phosphoserine" evidence="2">
    <location>
        <position position="41"/>
    </location>
</feature>
<feature type="modified residue" description="Phosphoserine" evidence="1">
    <location>
        <position position="48"/>
    </location>
</feature>
<feature type="modified residue" description="Phosphoserine" evidence="2">
    <location>
        <position position="71"/>
    </location>
</feature>
<feature type="modified residue" description="Phosphothreonine" evidence="2">
    <location>
        <position position="85"/>
    </location>
</feature>
<feature type="modified residue" description="Phosphoserine; by PKC" evidence="2">
    <location>
        <position position="93"/>
    </location>
</feature>
<feature type="modified residue" description="Phosphoserine; by PKC" evidence="2">
    <location>
        <position position="101"/>
    </location>
</feature>
<feature type="modified residue" description="Phosphoserine; by PKC" evidence="2">
    <location>
        <position position="104"/>
    </location>
</feature>
<feature type="modified residue" description="Phosphoserine" evidence="1">
    <location>
        <position position="119"/>
    </location>
</feature>
<feature type="modified residue" description="Phosphoserine; by MAPK8" evidence="1">
    <location>
        <position position="120"/>
    </location>
</feature>
<feature type="modified residue" description="Phosphoserine" evidence="1">
    <location>
        <position position="132"/>
    </location>
</feature>
<feature type="modified residue" description="Phosphothreonine; by MAPK8" evidence="1">
    <location>
        <position position="148"/>
    </location>
</feature>
<feature type="modified residue" description="Phosphoserine" evidence="2">
    <location>
        <position position="151"/>
    </location>
</feature>
<feature type="modified residue" description="Phosphoserine" evidence="1">
    <location>
        <position position="162"/>
    </location>
</feature>
<feature type="modified residue" description="Phosphothreonine" evidence="1">
    <location>
        <position position="170"/>
    </location>
</feature>
<feature type="modified residue" description="Phosphothreonine; by MAPK8" evidence="1">
    <location>
        <position position="182"/>
    </location>
</feature>
<feature type="lipid moiety-binding region" description="N-myristoyl glycine" evidence="2">
    <location>
        <position position="2"/>
    </location>
</feature>
<comment type="function">
    <text evidence="1 2">Controls cell movement by regulating actin cytoskeleton homeostasis and filopodium and lamellipodium formation. When unphosphorylated, induces cell migration. When phosphorylated by MAPK8, induces actin bundles formation and stabilization, thereby reducing actin plasticity, hence restricting cell movement, including neuronal migration. May be involved in coupling the protein kinase C and calmodulin signal transduction systems.</text>
</comment>
<comment type="subunit">
    <text evidence="1">Binds to filamentous actin (F-actin), but not to monomeric G-actin, independently of its phosphorylation status. Interacts with calmodulin.</text>
</comment>
<comment type="subcellular location">
    <subcellularLocation>
        <location evidence="1">Cytoplasm</location>
        <location evidence="1">Cytoskeleton</location>
    </subcellularLocation>
    <subcellularLocation>
        <location evidence="1">Cell membrane</location>
        <topology evidence="1">Lipid-anchor</topology>
    </subcellularLocation>
    <text evidence="1 2">Associates with the membrane via the insertion of the N-terminal N-myristoyl chain and the partial insertion of the effector domain. Association of the effector domain with membranes may be regulated by Ca(2+)/calmodulin. Colocalizes with F-actin at the leading edge of migrating cells.</text>
</comment>
<comment type="PTM">
    <text evidence="1">Phosphorylated. Phosphorylation at Ser-120 and Thr-182 is non-redundantly catalyzed by MAPK8 in vivo. Phosphorylation at Thr-148 is preferentially catalyzed by MAPK8 in vivo, but this modification can also be catalyzed by other kinases in the absence of MAPK8. May be phosphorylated by protein kinase C, which disrupts the interaction with calmodulin.</text>
</comment>
<comment type="similarity">
    <text evidence="4">Belongs to the MARCKS family.</text>
</comment>